<sequence length="72" mass="8183">MARVTVEDCLDKVETRFDLVVLASMRANKILKNGYSESMENEKKEKATVVALREIAESEITPEQILRNEIEG</sequence>
<proteinExistence type="inferred from homology"/>
<gene>
    <name evidence="1" type="primary">rpoZ</name>
    <name type="ordered locus">FTW_1540</name>
</gene>
<name>RPOZ_FRATW</name>
<organism>
    <name type="scientific">Francisella tularensis subsp. tularensis (strain WY96-3418)</name>
    <dbReference type="NCBI Taxonomy" id="418136"/>
    <lineage>
        <taxon>Bacteria</taxon>
        <taxon>Pseudomonadati</taxon>
        <taxon>Pseudomonadota</taxon>
        <taxon>Gammaproteobacteria</taxon>
        <taxon>Thiotrichales</taxon>
        <taxon>Francisellaceae</taxon>
        <taxon>Francisella</taxon>
    </lineage>
</organism>
<accession>A4IZA2</accession>
<keyword id="KW-0240">DNA-directed RNA polymerase</keyword>
<keyword id="KW-0548">Nucleotidyltransferase</keyword>
<keyword id="KW-0804">Transcription</keyword>
<keyword id="KW-0808">Transferase</keyword>
<dbReference type="EC" id="2.7.7.6" evidence="1"/>
<dbReference type="EMBL" id="CP000608">
    <property type="protein sequence ID" value="ABO47252.1"/>
    <property type="molecule type" value="Genomic_DNA"/>
</dbReference>
<dbReference type="RefSeq" id="WP_003019409.1">
    <property type="nucleotide sequence ID" value="NC_009257.1"/>
</dbReference>
<dbReference type="SMR" id="A4IZA2"/>
<dbReference type="KEGG" id="ftw:FTW_1540"/>
<dbReference type="HOGENOM" id="CLU_125406_5_1_6"/>
<dbReference type="GO" id="GO:0000428">
    <property type="term" value="C:DNA-directed RNA polymerase complex"/>
    <property type="evidence" value="ECO:0007669"/>
    <property type="project" value="UniProtKB-KW"/>
</dbReference>
<dbReference type="GO" id="GO:0003677">
    <property type="term" value="F:DNA binding"/>
    <property type="evidence" value="ECO:0007669"/>
    <property type="project" value="UniProtKB-UniRule"/>
</dbReference>
<dbReference type="GO" id="GO:0003899">
    <property type="term" value="F:DNA-directed RNA polymerase activity"/>
    <property type="evidence" value="ECO:0007669"/>
    <property type="project" value="UniProtKB-UniRule"/>
</dbReference>
<dbReference type="GO" id="GO:0006351">
    <property type="term" value="P:DNA-templated transcription"/>
    <property type="evidence" value="ECO:0007669"/>
    <property type="project" value="UniProtKB-UniRule"/>
</dbReference>
<dbReference type="Gene3D" id="3.90.940.10">
    <property type="match status" value="1"/>
</dbReference>
<dbReference type="HAMAP" id="MF_00366">
    <property type="entry name" value="RNApol_bact_RpoZ"/>
    <property type="match status" value="1"/>
</dbReference>
<dbReference type="InterPro" id="IPR003716">
    <property type="entry name" value="DNA-dir_RNA_pol_omega"/>
</dbReference>
<dbReference type="InterPro" id="IPR006110">
    <property type="entry name" value="Pol_omega/Rpo6/RPB6"/>
</dbReference>
<dbReference type="InterPro" id="IPR036161">
    <property type="entry name" value="RPB6/omega-like_sf"/>
</dbReference>
<dbReference type="NCBIfam" id="TIGR00690">
    <property type="entry name" value="rpoZ"/>
    <property type="match status" value="1"/>
</dbReference>
<dbReference type="PANTHER" id="PTHR34476">
    <property type="entry name" value="DNA-DIRECTED RNA POLYMERASE SUBUNIT OMEGA"/>
    <property type="match status" value="1"/>
</dbReference>
<dbReference type="PANTHER" id="PTHR34476:SF1">
    <property type="entry name" value="DNA-DIRECTED RNA POLYMERASE SUBUNIT OMEGA"/>
    <property type="match status" value="1"/>
</dbReference>
<dbReference type="Pfam" id="PF01192">
    <property type="entry name" value="RNA_pol_Rpb6"/>
    <property type="match status" value="1"/>
</dbReference>
<dbReference type="SMART" id="SM01409">
    <property type="entry name" value="RNA_pol_Rpb6"/>
    <property type="match status" value="1"/>
</dbReference>
<dbReference type="SUPFAM" id="SSF63562">
    <property type="entry name" value="RPB6/omega subunit-like"/>
    <property type="match status" value="1"/>
</dbReference>
<protein>
    <recommendedName>
        <fullName evidence="1">DNA-directed RNA polymerase subunit omega</fullName>
        <shortName evidence="1">RNAP omega subunit</shortName>
        <ecNumber evidence="1">2.7.7.6</ecNumber>
    </recommendedName>
    <alternativeName>
        <fullName evidence="1">RNA polymerase omega subunit</fullName>
    </alternativeName>
    <alternativeName>
        <fullName evidence="1">Transcriptase subunit omega</fullName>
    </alternativeName>
</protein>
<feature type="chain" id="PRO_1000005933" description="DNA-directed RNA polymerase subunit omega">
    <location>
        <begin position="1"/>
        <end position="72"/>
    </location>
</feature>
<comment type="function">
    <text evidence="1">Promotes RNA polymerase assembly. Latches the N- and C-terminal regions of the beta' subunit thereby facilitating its interaction with the beta and alpha subunits.</text>
</comment>
<comment type="catalytic activity">
    <reaction evidence="1">
        <text>RNA(n) + a ribonucleoside 5'-triphosphate = RNA(n+1) + diphosphate</text>
        <dbReference type="Rhea" id="RHEA:21248"/>
        <dbReference type="Rhea" id="RHEA-COMP:14527"/>
        <dbReference type="Rhea" id="RHEA-COMP:17342"/>
        <dbReference type="ChEBI" id="CHEBI:33019"/>
        <dbReference type="ChEBI" id="CHEBI:61557"/>
        <dbReference type="ChEBI" id="CHEBI:140395"/>
        <dbReference type="EC" id="2.7.7.6"/>
    </reaction>
</comment>
<comment type="subunit">
    <text evidence="1">The RNAP catalytic core consists of 2 alpha, 1 beta, 1 beta' and 1 omega subunit. When a sigma factor is associated with the core the holoenzyme is formed, which can initiate transcription.</text>
</comment>
<comment type="similarity">
    <text evidence="1">Belongs to the RNA polymerase subunit omega family.</text>
</comment>
<evidence type="ECO:0000255" key="1">
    <source>
        <dbReference type="HAMAP-Rule" id="MF_00366"/>
    </source>
</evidence>
<reference key="1">
    <citation type="journal article" date="2007" name="PLoS ONE">
        <title>Complete genomic characterization of a pathogenic A.II strain of Francisella tularensis subspecies tularensis.</title>
        <authorList>
            <person name="Beckstrom-Sternberg S.M."/>
            <person name="Auerbach R.K."/>
            <person name="Godbole S."/>
            <person name="Pearson J.V."/>
            <person name="Beckstrom-Sternberg J.S."/>
            <person name="Deng Z."/>
            <person name="Munk C."/>
            <person name="Kubota K."/>
            <person name="Zhou Y."/>
            <person name="Bruce D."/>
            <person name="Noronha J."/>
            <person name="Scheuermann R.H."/>
            <person name="Wang A."/>
            <person name="Wei X."/>
            <person name="Wang J."/>
            <person name="Hao J."/>
            <person name="Wagner D.M."/>
            <person name="Brettin T.S."/>
            <person name="Brown N."/>
            <person name="Gilna P."/>
            <person name="Keim P.S."/>
        </authorList>
    </citation>
    <scope>NUCLEOTIDE SEQUENCE [LARGE SCALE GENOMIC DNA]</scope>
    <source>
        <strain>WY96-3418</strain>
    </source>
</reference>